<evidence type="ECO:0000255" key="1"/>
<evidence type="ECO:0000255" key="2">
    <source>
        <dbReference type="PROSITE-ProRule" id="PRU00159"/>
    </source>
</evidence>
<evidence type="ECO:0000256" key="3">
    <source>
        <dbReference type="SAM" id="MobiDB-lite"/>
    </source>
</evidence>
<evidence type="ECO:0000269" key="4">
    <source>
    </source>
</evidence>
<evidence type="ECO:0000269" key="5">
    <source>
    </source>
</evidence>
<evidence type="ECO:0000269" key="6">
    <source>
    </source>
</evidence>
<evidence type="ECO:0000269" key="7">
    <source>
    </source>
</evidence>
<evidence type="ECO:0000303" key="8">
    <source>
    </source>
</evidence>
<evidence type="ECO:0000305" key="9"/>
<evidence type="ECO:0000312" key="10">
    <source>
        <dbReference type="EMBL" id="AED92600.1"/>
    </source>
</evidence>
<evidence type="ECO:0000312" key="11">
    <source>
        <dbReference type="Proteomes" id="UP000006548"/>
    </source>
</evidence>
<accession>F4JY37</accession>
<proteinExistence type="evidence at protein level"/>
<protein>
    <recommendedName>
        <fullName evidence="9">Serine/threonine-protein kinase RUNKEL</fullName>
    </recommendedName>
    <alternativeName>
        <fullName evidence="9">Protein EMBRYO DEFECTIVE 3013</fullName>
    </alternativeName>
    <alternativeName>
        <fullName evidence="8">Protein RUNKEL</fullName>
        <ecNumber evidence="9">2.7.11.1</ecNumber>
    </alternativeName>
</protein>
<organism evidence="11">
    <name type="scientific">Arabidopsis thaliana</name>
    <name type="common">Mouse-ear cress</name>
    <dbReference type="NCBI Taxonomy" id="3702"/>
    <lineage>
        <taxon>Eukaryota</taxon>
        <taxon>Viridiplantae</taxon>
        <taxon>Streptophyta</taxon>
        <taxon>Embryophyta</taxon>
        <taxon>Tracheophyta</taxon>
        <taxon>Spermatophyta</taxon>
        <taxon>Magnoliopsida</taxon>
        <taxon>eudicotyledons</taxon>
        <taxon>Gunneridae</taxon>
        <taxon>Pentapetalae</taxon>
        <taxon>rosids</taxon>
        <taxon>malvids</taxon>
        <taxon>Brassicales</taxon>
        <taxon>Brassicaceae</taxon>
        <taxon>Camelineae</taxon>
        <taxon>Arabidopsis</taxon>
    </lineage>
</organism>
<sequence>MNQYHIYEAIGHGKCSTVYKGRKKKTIEYFACKSVDKSRKNKVLQEVRILHSLNHPNVLKFYAWYETSAHMWLVLEYCVGGDLRTLLQQDCKLPEESIYGLAYDLVIALQYLHSKGIIYCDLKPSNILLDENGHIKLCDFGLSRKLDDISKSPSTGKRGTPYYMAPELYEDGGIHSFASDLWALGCVLYECYTGRPPFVAREFTQLVKSIHSDPTPPLPGNASRSFVNLIESLLIKDPAQRIQWADLCGHAFWKSKINLVQLPTQPAFDDMIGINTKPCLSERNGDRPNKTPPKYREKDRKGGSKQNENSIQGSKGHETPIKGTPGGSKAQAKLPSRATEEKHGGRPAANRQVNILRLSRIAKANLQKENEKENYRRPLPNSNENCAEVKIDNTDMELDFDENNDDEGPDESEGTENTSCAQEERVMSHNENHRRQRVVSSNVPDENSSANETPTLGEARDCHEDQSEPMDMSAAPPSASPQLKTHRGRETSGVAVNHDSSKAPTSLTDVFWHISDLSVRPVMPSRKSDKEAVHSLSFETPQPSDFSKKGKQELEPLNNRIITVLSGSSSGLSEKQNLIRYLETLSTNADAANILTNGPIMLVLVKVLRLSKTPAFRVQIASLIGLLIRHSTSIEDDLANSGILDSLTNGLRDKHEKVRRFSMAALGELLFYISTQNEHKDFKPPESPSKETRSASGWQVSNALISLVSSVLRKGEDDLTQVYALRTIENICSQGAYWATRFSSQDLISNLCYIYKATGKQESMRQTAGSCLVRLARFNPPCIQTVVEKLSLKEIASSFVKGSAREQQVCLNLLNMAMIGSHTFTSFGRHLVTLTEEKNLFPSLLSIIEQGTEVLRGKALLFVAFLCKNSRRWLTNFFCNARFLPVVDRLAKEKDSYLQQCLEAFVNVIASIIPGMLDTITNDIQQLMTGRRHGPVSPLNSRAPVKTNAHLFPVVLHLLGSSSFKNKMVTPQVLRQLANLTKLVEASFQGRDDFRVTLLQVLECITGDAPLVTQNGEIIIREILPSLAAIYNGNKDGDARFLCLKIWFDSLTILLTECTEIEQQISEDLKSISNSHFLPLYPALIQDEDPIPAYAQKLLVMLVEFDYIKISNLLRHNTVSQCFEFLLGDLSSANVNNVKLCLALASAPEMESKLLSQLKVVRRIGNLLEFVNAKDMEDFLEPTLSLCRAFLLRSLGNKKGLSSNYTKEPTLLSEASFTFEVDPQECIRDIADFGSNIGLFLHFAGLDDDTSIAVADIASECVVLLLKAASREATTGFLTNLPKITPILDSWRRRKSTELHLLVLKRVLHCLGYACKQYLSQAMILSISGHDVSKINAIVSEMKNSDAAGLNSIASLVAMELQRLPR</sequence>
<dbReference type="EC" id="2.7.11.1" evidence="9"/>
<dbReference type="EMBL" id="AC051627">
    <property type="status" value="NOT_ANNOTATED_CDS"/>
    <property type="molecule type" value="Genomic_DNA"/>
</dbReference>
<dbReference type="EMBL" id="CP002688">
    <property type="protein sequence ID" value="AED92600.1"/>
    <property type="molecule type" value="Genomic_DNA"/>
</dbReference>
<dbReference type="RefSeq" id="NP_197371.2">
    <property type="nucleotide sequence ID" value="NM_121875.4"/>
</dbReference>
<dbReference type="SMR" id="F4JY37"/>
<dbReference type="FunCoup" id="F4JY37">
    <property type="interactions" value="2432"/>
</dbReference>
<dbReference type="STRING" id="3702.F4JY37"/>
<dbReference type="iPTMnet" id="F4JY37"/>
<dbReference type="PaxDb" id="3702-AT5G18700.1"/>
<dbReference type="ProteomicsDB" id="226676"/>
<dbReference type="EnsemblPlants" id="AT5G18700.1">
    <property type="protein sequence ID" value="AT5G18700.1"/>
    <property type="gene ID" value="AT5G18700"/>
</dbReference>
<dbReference type="GeneID" id="831988"/>
<dbReference type="Gramene" id="AT5G18700.1">
    <property type="protein sequence ID" value="AT5G18700.1"/>
    <property type="gene ID" value="AT5G18700"/>
</dbReference>
<dbReference type="KEGG" id="ath:AT5G18700"/>
<dbReference type="Araport" id="AT5G18700"/>
<dbReference type="TAIR" id="AT5G18700">
    <property type="gene designation" value="RUK"/>
</dbReference>
<dbReference type="eggNOG" id="KOG0597">
    <property type="taxonomic scope" value="Eukaryota"/>
</dbReference>
<dbReference type="HOGENOM" id="CLU_003494_0_0_1"/>
<dbReference type="InParanoid" id="F4JY37"/>
<dbReference type="OMA" id="NWYETNN"/>
<dbReference type="OrthoDB" id="24822at2759"/>
<dbReference type="PhylomeDB" id="F4JY37"/>
<dbReference type="PRO" id="PR:F4JY37"/>
<dbReference type="Proteomes" id="UP000006548">
    <property type="component" value="Chromosome 5"/>
</dbReference>
<dbReference type="ExpressionAtlas" id="F4JY37">
    <property type="expression patterns" value="baseline and differential"/>
</dbReference>
<dbReference type="GO" id="GO:0005874">
    <property type="term" value="C:microtubule"/>
    <property type="evidence" value="ECO:0007669"/>
    <property type="project" value="UniProtKB-KW"/>
</dbReference>
<dbReference type="GO" id="GO:0009524">
    <property type="term" value="C:phragmoplast"/>
    <property type="evidence" value="ECO:0000314"/>
    <property type="project" value="UniProtKB"/>
</dbReference>
<dbReference type="GO" id="GO:0009506">
    <property type="term" value="C:plasmodesma"/>
    <property type="evidence" value="ECO:0007005"/>
    <property type="project" value="TAIR"/>
</dbReference>
<dbReference type="GO" id="GO:0009574">
    <property type="term" value="C:preprophase band"/>
    <property type="evidence" value="ECO:0000314"/>
    <property type="project" value="UniProtKB"/>
</dbReference>
<dbReference type="GO" id="GO:0005819">
    <property type="term" value="C:spindle"/>
    <property type="evidence" value="ECO:0000314"/>
    <property type="project" value="UniProtKB"/>
</dbReference>
<dbReference type="GO" id="GO:0005524">
    <property type="term" value="F:ATP binding"/>
    <property type="evidence" value="ECO:0007669"/>
    <property type="project" value="UniProtKB-KW"/>
</dbReference>
<dbReference type="GO" id="GO:0008017">
    <property type="term" value="F:microtubule binding"/>
    <property type="evidence" value="ECO:0000314"/>
    <property type="project" value="TAIR"/>
</dbReference>
<dbReference type="GO" id="GO:0016740">
    <property type="term" value="F:transferase activity"/>
    <property type="evidence" value="ECO:0007669"/>
    <property type="project" value="UniProtKB-KW"/>
</dbReference>
<dbReference type="GO" id="GO:0007349">
    <property type="term" value="P:cellularization"/>
    <property type="evidence" value="ECO:0000315"/>
    <property type="project" value="UniProtKB"/>
</dbReference>
<dbReference type="GO" id="GO:0000911">
    <property type="term" value="P:cytokinesis by cell plate formation"/>
    <property type="evidence" value="ECO:0000315"/>
    <property type="project" value="TAIR"/>
</dbReference>
<dbReference type="GO" id="GO:0010342">
    <property type="term" value="P:endosperm cellularization"/>
    <property type="evidence" value="ECO:0000315"/>
    <property type="project" value="UniProtKB"/>
</dbReference>
<dbReference type="GO" id="GO:0009556">
    <property type="term" value="P:microsporogenesis"/>
    <property type="evidence" value="ECO:0000315"/>
    <property type="project" value="UniProtKB"/>
</dbReference>
<dbReference type="GO" id="GO:0000914">
    <property type="term" value="P:phragmoplast assembly"/>
    <property type="evidence" value="ECO:0000315"/>
    <property type="project" value="TAIR"/>
</dbReference>
<dbReference type="GO" id="GO:0009555">
    <property type="term" value="P:pollen development"/>
    <property type="evidence" value="ECO:0000315"/>
    <property type="project" value="UniProtKB"/>
</dbReference>
<dbReference type="GO" id="GO:0010245">
    <property type="term" value="P:radial microtubular system formation"/>
    <property type="evidence" value="ECO:0000315"/>
    <property type="project" value="UniProtKB"/>
</dbReference>
<dbReference type="CDD" id="cd14010">
    <property type="entry name" value="STKc_ULK4"/>
    <property type="match status" value="1"/>
</dbReference>
<dbReference type="FunFam" id="3.30.200.20:FF:000042">
    <property type="entry name" value="Aurora kinase A"/>
    <property type="match status" value="1"/>
</dbReference>
<dbReference type="FunFam" id="1.10.510.10:FF:000686">
    <property type="entry name" value="Serine/threonine-protein kinase ULK4"/>
    <property type="match status" value="1"/>
</dbReference>
<dbReference type="Gene3D" id="1.25.10.10">
    <property type="entry name" value="Leucine-rich Repeat Variant"/>
    <property type="match status" value="1"/>
</dbReference>
<dbReference type="Gene3D" id="1.10.510.10">
    <property type="entry name" value="Transferase(Phosphotransferase) domain 1"/>
    <property type="match status" value="1"/>
</dbReference>
<dbReference type="InterPro" id="IPR011989">
    <property type="entry name" value="ARM-like"/>
</dbReference>
<dbReference type="InterPro" id="IPR016024">
    <property type="entry name" value="ARM-type_fold"/>
</dbReference>
<dbReference type="InterPro" id="IPR056980">
    <property type="entry name" value="ARM_RUK"/>
</dbReference>
<dbReference type="InterPro" id="IPR056981">
    <property type="entry name" value="HEAT_ULK4_RUNKEL"/>
</dbReference>
<dbReference type="InterPro" id="IPR011009">
    <property type="entry name" value="Kinase-like_dom_sf"/>
</dbReference>
<dbReference type="InterPro" id="IPR000719">
    <property type="entry name" value="Prot_kinase_dom"/>
</dbReference>
<dbReference type="InterPro" id="IPR044591">
    <property type="entry name" value="RUK"/>
</dbReference>
<dbReference type="InterPro" id="IPR008271">
    <property type="entry name" value="Ser/Thr_kinase_AS"/>
</dbReference>
<dbReference type="PANTHER" id="PTHR46562">
    <property type="entry name" value="SERINE/THREONINE-KINASE ULK4-LIKE PROTEIN-RELATED"/>
    <property type="match status" value="1"/>
</dbReference>
<dbReference type="PANTHER" id="PTHR46562:SF1">
    <property type="entry name" value="SERINE_THREONINE-PROTEIN KINASE ULK4"/>
    <property type="match status" value="1"/>
</dbReference>
<dbReference type="Pfam" id="PF24970">
    <property type="entry name" value="ARM_RUK"/>
    <property type="match status" value="1"/>
</dbReference>
<dbReference type="Pfam" id="PF23606">
    <property type="entry name" value="HEAT_ULK4"/>
    <property type="match status" value="1"/>
</dbReference>
<dbReference type="Pfam" id="PF00069">
    <property type="entry name" value="Pkinase"/>
    <property type="match status" value="1"/>
</dbReference>
<dbReference type="SMART" id="SM00220">
    <property type="entry name" value="S_TKc"/>
    <property type="match status" value="1"/>
</dbReference>
<dbReference type="SUPFAM" id="SSF48371">
    <property type="entry name" value="ARM repeat"/>
    <property type="match status" value="1"/>
</dbReference>
<dbReference type="SUPFAM" id="SSF56112">
    <property type="entry name" value="Protein kinase-like (PK-like)"/>
    <property type="match status" value="1"/>
</dbReference>
<dbReference type="PROSITE" id="PS50011">
    <property type="entry name" value="PROTEIN_KINASE_DOM"/>
    <property type="match status" value="1"/>
</dbReference>
<dbReference type="PROSITE" id="PS00108">
    <property type="entry name" value="PROTEIN_KINASE_ST"/>
    <property type="match status" value="1"/>
</dbReference>
<keyword id="KW-0067">ATP-binding</keyword>
<keyword id="KW-0131">Cell cycle</keyword>
<keyword id="KW-0132">Cell division</keyword>
<keyword id="KW-0963">Cytoplasm</keyword>
<keyword id="KW-0206">Cytoskeleton</keyword>
<keyword id="KW-0418">Kinase</keyword>
<keyword id="KW-0493">Microtubule</keyword>
<keyword id="KW-0547">Nucleotide-binding</keyword>
<keyword id="KW-1185">Reference proteome</keyword>
<keyword id="KW-0677">Repeat</keyword>
<keyword id="KW-0723">Serine/threonine-protein kinase</keyword>
<keyword id="KW-0808">Transferase</keyword>
<name>RUK_ARATH</name>
<gene>
    <name evidence="8" type="primary">RUK</name>
    <name evidence="9" type="synonym">EMB3013</name>
    <name evidence="10" type="ordered locus">At5g18700</name>
    <name evidence="9" type="ORF">T1A4.80</name>
</gene>
<reference key="1">
    <citation type="journal article" date="2000" name="Nature">
        <title>Sequence and analysis of chromosome 5 of the plant Arabidopsis thaliana.</title>
        <authorList>
            <person name="Tabata S."/>
            <person name="Kaneko T."/>
            <person name="Nakamura Y."/>
            <person name="Kotani H."/>
            <person name="Kato T."/>
            <person name="Asamizu E."/>
            <person name="Miyajima N."/>
            <person name="Sasamoto S."/>
            <person name="Kimura T."/>
            <person name="Hosouchi T."/>
            <person name="Kawashima K."/>
            <person name="Kohara M."/>
            <person name="Matsumoto M."/>
            <person name="Matsuno A."/>
            <person name="Muraki A."/>
            <person name="Nakayama S."/>
            <person name="Nakazaki N."/>
            <person name="Naruo K."/>
            <person name="Okumura S."/>
            <person name="Shinpo S."/>
            <person name="Takeuchi C."/>
            <person name="Wada T."/>
            <person name="Watanabe A."/>
            <person name="Yamada M."/>
            <person name="Yasuda M."/>
            <person name="Sato S."/>
            <person name="de la Bastide M."/>
            <person name="Huang E."/>
            <person name="Spiegel L."/>
            <person name="Gnoj L."/>
            <person name="O'Shaughnessy A."/>
            <person name="Preston R."/>
            <person name="Habermann K."/>
            <person name="Murray J."/>
            <person name="Johnson D."/>
            <person name="Rohlfing T."/>
            <person name="Nelson J."/>
            <person name="Stoneking T."/>
            <person name="Pepin K."/>
            <person name="Spieth J."/>
            <person name="Sekhon M."/>
            <person name="Armstrong J."/>
            <person name="Becker M."/>
            <person name="Belter E."/>
            <person name="Cordum H."/>
            <person name="Cordes M."/>
            <person name="Courtney L."/>
            <person name="Courtney W."/>
            <person name="Dante M."/>
            <person name="Du H."/>
            <person name="Edwards J."/>
            <person name="Fryman J."/>
            <person name="Haakensen B."/>
            <person name="Lamar E."/>
            <person name="Latreille P."/>
            <person name="Leonard S."/>
            <person name="Meyer R."/>
            <person name="Mulvaney E."/>
            <person name="Ozersky P."/>
            <person name="Riley A."/>
            <person name="Strowmatt C."/>
            <person name="Wagner-McPherson C."/>
            <person name="Wollam A."/>
            <person name="Yoakum M."/>
            <person name="Bell M."/>
            <person name="Dedhia N."/>
            <person name="Parnell L."/>
            <person name="Shah R."/>
            <person name="Rodriguez M."/>
            <person name="Hoon See L."/>
            <person name="Vil D."/>
            <person name="Baker J."/>
            <person name="Kirchoff K."/>
            <person name="Toth K."/>
            <person name="King L."/>
            <person name="Bahret A."/>
            <person name="Miller B."/>
            <person name="Marra M.A."/>
            <person name="Martienssen R."/>
            <person name="McCombie W.R."/>
            <person name="Wilson R.K."/>
            <person name="Murphy G."/>
            <person name="Bancroft I."/>
            <person name="Volckaert G."/>
            <person name="Wambutt R."/>
            <person name="Duesterhoeft A."/>
            <person name="Stiekema W."/>
            <person name="Pohl T."/>
            <person name="Entian K.-D."/>
            <person name="Terryn N."/>
            <person name="Hartley N."/>
            <person name="Bent E."/>
            <person name="Johnson S."/>
            <person name="Langham S.-A."/>
            <person name="McCullagh B."/>
            <person name="Robben J."/>
            <person name="Grymonprez B."/>
            <person name="Zimmermann W."/>
            <person name="Ramsperger U."/>
            <person name="Wedler H."/>
            <person name="Balke K."/>
            <person name="Wedler E."/>
            <person name="Peters S."/>
            <person name="van Staveren M."/>
            <person name="Dirkse W."/>
            <person name="Mooijman P."/>
            <person name="Klein Lankhorst R."/>
            <person name="Weitzenegger T."/>
            <person name="Bothe G."/>
            <person name="Rose M."/>
            <person name="Hauf J."/>
            <person name="Berneiser S."/>
            <person name="Hempel S."/>
            <person name="Feldpausch M."/>
            <person name="Lamberth S."/>
            <person name="Villarroel R."/>
            <person name="Gielen J."/>
            <person name="Ardiles W."/>
            <person name="Bents O."/>
            <person name="Lemcke K."/>
            <person name="Kolesov G."/>
            <person name="Mayer K.F.X."/>
            <person name="Rudd S."/>
            <person name="Schoof H."/>
            <person name="Schueller C."/>
            <person name="Zaccaria P."/>
            <person name="Mewes H.-W."/>
            <person name="Bevan M."/>
            <person name="Fransz P.F."/>
        </authorList>
    </citation>
    <scope>NUCLEOTIDE SEQUENCE [LARGE SCALE GENOMIC DNA]</scope>
    <source>
        <strain>cv. Columbia</strain>
    </source>
</reference>
<reference key="2">
    <citation type="journal article" date="2017" name="Plant J.">
        <title>Araport11: a complete reannotation of the Arabidopsis thaliana reference genome.</title>
        <authorList>
            <person name="Cheng C.Y."/>
            <person name="Krishnakumar V."/>
            <person name="Chan A.P."/>
            <person name="Thibaud-Nissen F."/>
            <person name="Schobel S."/>
            <person name="Town C.D."/>
        </authorList>
    </citation>
    <scope>GENOME REANNOTATION</scope>
    <source>
        <strain>cv. Columbia</strain>
    </source>
</reference>
<reference key="3">
    <citation type="journal article" date="2000" name="Plant Mol. Biol.">
        <title>Genetic dissection of cytokinesis.</title>
        <authorList>
            <person name="Nacry P."/>
            <person name="Mayer U."/>
            <person name="Jurgens G."/>
        </authorList>
    </citation>
    <scope>FUNCTION</scope>
    <scope>DISRUPTION PHENOTYPE</scope>
</reference>
<reference key="4">
    <citation type="journal article" date="2002" name="Development">
        <title>Cellularisation in the endosperm of Arabidopsis thaliana is coupled to mitosis and shares multiple components with cytokinesis.</title>
        <authorList>
            <person name="Sorensen M.B."/>
            <person name="Mayer U."/>
            <person name="Lukowitz W."/>
            <person name="Robert H."/>
            <person name="Chambrier P."/>
            <person name="Juergens G."/>
            <person name="Somerville C."/>
            <person name="Lepiniec L."/>
            <person name="Berger F."/>
        </authorList>
    </citation>
    <scope>FUNCTION</scope>
    <scope>DISRUPTION PHENOTYPE</scope>
    <source>
        <strain>cv. Landsberg erecta</strain>
        <strain>cv. Wassilewskija</strain>
    </source>
</reference>
<reference key="5">
    <citation type="journal article" date="2009" name="Curr. Biol.">
        <title>Microtubule-associated kinase-like protein RUNKEL needed for cell plate expansion in Arabidopsis cytokinesis.</title>
        <authorList>
            <person name="Krupnova T."/>
            <person name="Sasabe M."/>
            <person name="Ghebreghiorghis L."/>
            <person name="Gruber C.W."/>
            <person name="Hamada T."/>
            <person name="Dehmel V."/>
            <person name="Strompen G."/>
            <person name="Stierhof Y.-D."/>
            <person name="Lukowitz W."/>
            <person name="Kemmerling B."/>
            <person name="Machida Y."/>
            <person name="Hashimoto T."/>
            <person name="Mayer U."/>
            <person name="Juergens G."/>
        </authorList>
    </citation>
    <scope>FUNCTION</scope>
    <scope>DISRUPTION PHENOTYPE</scope>
    <scope>MUTAGENESIS OF LYS-33 AND ASP-121</scope>
    <scope>INDUCTION</scope>
    <scope>INTERACTION WITH MICROTUBULES</scope>
    <scope>SUBCELLULAR LOCATION</scope>
    <scope>TISSUE SPECIFICITY</scope>
    <source>
        <strain>cv. Columbia</strain>
        <strain>cv. Landsberg erecta</strain>
    </source>
</reference>
<reference key="6">
    <citation type="journal article" date="2013" name="Plant J.">
        <title>The microtubule-associated kinase-like protein RUNKEL functions in somatic and syncytial cytokinesis.</title>
        <authorList>
            <person name="Krupnova T."/>
            <person name="Stierhof Y.-D."/>
            <person name="Hiller U."/>
            <person name="Strompen G."/>
            <person name="Mueller S."/>
        </authorList>
    </citation>
    <scope>FUNCTION</scope>
    <scope>DISRUPTION PHENOTYPE</scope>
    <scope>TISSUE SPECIFICITY</scope>
    <source>
        <strain>cv. Columbia</strain>
    </source>
</reference>
<feature type="chain" id="PRO_0000433640" description="Serine/threonine-protein kinase RUNKEL">
    <location>
        <begin position="1"/>
        <end position="1366"/>
    </location>
</feature>
<feature type="repeat" description="HEAT 1" evidence="1">
    <location>
        <begin position="595"/>
        <end position="633"/>
    </location>
</feature>
<feature type="repeat" description="HEAT 2" evidence="1">
    <location>
        <begin position="638"/>
        <end position="675"/>
    </location>
</feature>
<feature type="repeat" description="HEAT 3" evidence="1">
    <location>
        <begin position="699"/>
        <end position="737"/>
    </location>
</feature>
<feature type="repeat" description="HEAT 4" evidence="1">
    <location>
        <begin position="835"/>
        <end position="872"/>
    </location>
</feature>
<feature type="repeat" description="HEAT 5" evidence="1">
    <location>
        <begin position="878"/>
        <end position="907"/>
    </location>
</feature>
<feature type="repeat" description="HEAT 6" evidence="1">
    <location>
        <begin position="908"/>
        <end position="945"/>
    </location>
</feature>
<feature type="repeat" description="HEAT 7" evidence="1">
    <location>
        <begin position="946"/>
        <end position="986"/>
    </location>
</feature>
<feature type="repeat" description="HEAT 8" evidence="1">
    <location>
        <begin position="992"/>
        <end position="1018"/>
    </location>
</feature>
<feature type="repeat" description="HEAT 9" evidence="1">
    <location>
        <begin position="1019"/>
        <end position="1057"/>
    </location>
</feature>
<feature type="repeat" description="HEAT 10" evidence="1">
    <location>
        <begin position="1072"/>
        <end position="1111"/>
    </location>
</feature>
<feature type="repeat" description="HEAT 11" evidence="1">
    <location>
        <begin position="1279"/>
        <end position="1316"/>
    </location>
</feature>
<feature type="repeat" description="HEAT 12" evidence="1">
    <location>
        <begin position="1329"/>
        <end position="1366"/>
    </location>
</feature>
<feature type="region of interest" description="Disordered" evidence="3">
    <location>
        <begin position="276"/>
        <end position="356"/>
    </location>
</feature>
<feature type="region of interest" description="Disordered" evidence="3">
    <location>
        <begin position="367"/>
        <end position="386"/>
    </location>
</feature>
<feature type="region of interest" description="Disordered" evidence="3">
    <location>
        <begin position="398"/>
        <end position="502"/>
    </location>
</feature>
<feature type="region of interest" description="Disordered" evidence="3">
    <location>
        <begin position="524"/>
        <end position="549"/>
    </location>
</feature>
<feature type="compositionally biased region" description="Basic and acidic residues" evidence="3">
    <location>
        <begin position="283"/>
        <end position="302"/>
    </location>
</feature>
<feature type="compositionally biased region" description="Polar residues" evidence="3">
    <location>
        <begin position="304"/>
        <end position="313"/>
    </location>
</feature>
<feature type="compositionally biased region" description="Basic and acidic residues" evidence="3">
    <location>
        <begin position="367"/>
        <end position="376"/>
    </location>
</feature>
<feature type="compositionally biased region" description="Acidic residues" evidence="3">
    <location>
        <begin position="398"/>
        <end position="414"/>
    </location>
</feature>
<feature type="compositionally biased region" description="Basic and acidic residues" evidence="3">
    <location>
        <begin position="422"/>
        <end position="433"/>
    </location>
</feature>
<feature type="compositionally biased region" description="Polar residues" evidence="3">
    <location>
        <begin position="438"/>
        <end position="454"/>
    </location>
</feature>
<feature type="active site" description="Proton acceptor" evidence="2">
    <location>
        <position position="121"/>
    </location>
</feature>
<feature type="binding site" evidence="2">
    <location>
        <begin position="10"/>
        <end position="18"/>
    </location>
    <ligand>
        <name>ATP</name>
        <dbReference type="ChEBI" id="CHEBI:30616"/>
    </ligand>
</feature>
<feature type="binding site" evidence="2">
    <location>
        <position position="33"/>
    </location>
    <ligand>
        <name>ATP</name>
        <dbReference type="ChEBI" id="CHEBI:30616"/>
    </ligand>
</feature>
<feature type="mutagenesis site" description="Able to rescue the seedling lethality of disrupted plants, but later retarded development, and cytokinesis defects observed in flowers." evidence="6">
    <original>K</original>
    <variation>W</variation>
    <location>
        <position position="33"/>
    </location>
</feature>
<feature type="mutagenesis site" description="Able to rescue the seedling lethality of disrupted plants, but later retarded development, and cytokinesis defects observed in flowers." evidence="6">
    <original>D</original>
    <variation>A</variation>
    <location>
        <position position="121"/>
    </location>
</feature>
<comment type="function">
    <text evidence="4 5 6 7">Essential protein that regulates phragmoplast microtubule organization during cell plate expansion in cytokinesis during cell division, both somatic and syncytial (PubMed:11089872, PubMed:19268593, PubMed:23451828). Required for endosperm cellularisation (PubMed:12421698, PubMed:23451828). In pollen development, involved in cellularisation during microsporogenesis by regulating radial microtubules (MT) organization in microspore mother cells (PubMed:23451828). Seems to not have kinase activity (PubMed:19268593).</text>
</comment>
<comment type="catalytic activity">
    <reaction evidence="9">
        <text>L-seryl-[protein] + ATP = O-phospho-L-seryl-[protein] + ADP + H(+)</text>
        <dbReference type="Rhea" id="RHEA:17989"/>
        <dbReference type="Rhea" id="RHEA-COMP:9863"/>
        <dbReference type="Rhea" id="RHEA-COMP:11604"/>
        <dbReference type="ChEBI" id="CHEBI:15378"/>
        <dbReference type="ChEBI" id="CHEBI:29999"/>
        <dbReference type="ChEBI" id="CHEBI:30616"/>
        <dbReference type="ChEBI" id="CHEBI:83421"/>
        <dbReference type="ChEBI" id="CHEBI:456216"/>
        <dbReference type="EC" id="2.7.11.1"/>
    </reaction>
</comment>
<comment type="catalytic activity">
    <reaction evidence="9">
        <text>L-threonyl-[protein] + ATP = O-phospho-L-threonyl-[protein] + ADP + H(+)</text>
        <dbReference type="Rhea" id="RHEA:46608"/>
        <dbReference type="Rhea" id="RHEA-COMP:11060"/>
        <dbReference type="Rhea" id="RHEA-COMP:11605"/>
        <dbReference type="ChEBI" id="CHEBI:15378"/>
        <dbReference type="ChEBI" id="CHEBI:30013"/>
        <dbReference type="ChEBI" id="CHEBI:30616"/>
        <dbReference type="ChEBI" id="CHEBI:61977"/>
        <dbReference type="ChEBI" id="CHEBI:456216"/>
        <dbReference type="EC" id="2.7.11.1"/>
    </reaction>
</comment>
<comment type="subunit">
    <text evidence="6">Binds to microtubules (MT).</text>
</comment>
<comment type="subcellular location">
    <subcellularLocation>
        <location evidence="6">Cytoplasm</location>
        <location evidence="6">Cytoskeleton</location>
        <location evidence="6">Phragmoplast</location>
    </subcellularLocation>
    <subcellularLocation>
        <location evidence="6">Cytoplasm</location>
        <location evidence="6">Cytoskeleton</location>
        <location evidence="6">Spindle</location>
    </subcellularLocation>
    <text evidence="6">Also colocalizes with mitotic preprophase band.</text>
</comment>
<comment type="tissue specificity">
    <text evidence="6 7">Expressed in proliferating tissues of seedlings, lateral roots, young rosette leaves, siliques, flowers, embryos and stems (including apical meristem).</text>
</comment>
<comment type="induction">
    <text evidence="6">Cell-cycle-regulated.</text>
</comment>
<comment type="disruption phenotype">
    <text evidence="4 5 6 7">Seedling lethal (PubMed:19268593). Abnormal cell division with defective cytokinesis due to abnormal phragmoplast organization and arrested cell plate expansion, leading to enlarged cells and nuclei as well as incomplete cell walls (PubMed:11089872, PubMed:19268593). In metaphase and anaphase, enlarged cells with several mitotic spindles or a single greatly enlarged spindle (PubMed:19268593). Impaired endosperm development with altered cellularisation (PubMed:12421698, PubMed:23451828). Cellularization defects caused by disorganized radial microtubules (MT) arrays in seedlings and adult tissues, as well as during male meiocyte development. Irregular and incomplete or absent intersporal cell walls in male tetrads, resulting in abnormal pollen and reduced fertility. Sterile and aborted ovules (PubMed:23451828).</text>
</comment>
<comment type="similarity">
    <text evidence="2">Belongs to the protein kinase superfamily. Ser/Thr protein kinase family.</text>
</comment>